<reference key="1">
    <citation type="journal article" date="2007" name="Genome Res.">
        <title>Lateral gene transfer between obligate intracellular bacteria: evidence from the Rickettsia massiliae genome.</title>
        <authorList>
            <person name="Blanc G."/>
            <person name="Ogata H."/>
            <person name="Robert C."/>
            <person name="Audic S."/>
            <person name="Claverie J.-M."/>
            <person name="Raoult D."/>
        </authorList>
    </citation>
    <scope>NUCLEOTIDE SEQUENCE [LARGE SCALE GENOMIC DNA]</scope>
    <source>
        <strain>Mtu5</strain>
    </source>
</reference>
<proteinExistence type="inferred from homology"/>
<protein>
    <recommendedName>
        <fullName evidence="1">Small ribosomal subunit protein uS10</fullName>
    </recommendedName>
    <alternativeName>
        <fullName evidence="2">30S ribosomal protein S10</fullName>
    </alternativeName>
</protein>
<sequence>MKNKIKIRLKSFDHRSLDQATKEIVSAVKRTFANINGPIPLPRKIGRFTVNRSPHVHKKSREQFEIRKHKRLLVIGDPNPAVVDALSKVDLAAGVDVVIELESGE</sequence>
<keyword id="KW-0687">Ribonucleoprotein</keyword>
<keyword id="KW-0689">Ribosomal protein</keyword>
<organism>
    <name type="scientific">Rickettsia massiliae (strain Mtu5)</name>
    <dbReference type="NCBI Taxonomy" id="416276"/>
    <lineage>
        <taxon>Bacteria</taxon>
        <taxon>Pseudomonadati</taxon>
        <taxon>Pseudomonadota</taxon>
        <taxon>Alphaproteobacteria</taxon>
        <taxon>Rickettsiales</taxon>
        <taxon>Rickettsiaceae</taxon>
        <taxon>Rickettsieae</taxon>
        <taxon>Rickettsia</taxon>
        <taxon>spotted fever group</taxon>
    </lineage>
</organism>
<name>RS10_RICM5</name>
<accession>A8F2E8</accession>
<comment type="function">
    <text evidence="1">Involved in the binding of tRNA to the ribosomes.</text>
</comment>
<comment type="subunit">
    <text evidence="1">Part of the 30S ribosomal subunit.</text>
</comment>
<comment type="similarity">
    <text evidence="1">Belongs to the universal ribosomal protein uS10 family.</text>
</comment>
<dbReference type="EMBL" id="CP000683">
    <property type="protein sequence ID" value="ABV85084.1"/>
    <property type="molecule type" value="Genomic_DNA"/>
</dbReference>
<dbReference type="RefSeq" id="WP_012153050.1">
    <property type="nucleotide sequence ID" value="NC_009900.1"/>
</dbReference>
<dbReference type="SMR" id="A8F2E8"/>
<dbReference type="KEGG" id="rms:RMA_1041"/>
<dbReference type="HOGENOM" id="CLU_122625_1_3_5"/>
<dbReference type="Proteomes" id="UP000001311">
    <property type="component" value="Chromosome"/>
</dbReference>
<dbReference type="GO" id="GO:1990904">
    <property type="term" value="C:ribonucleoprotein complex"/>
    <property type="evidence" value="ECO:0007669"/>
    <property type="project" value="UniProtKB-KW"/>
</dbReference>
<dbReference type="GO" id="GO:0005840">
    <property type="term" value="C:ribosome"/>
    <property type="evidence" value="ECO:0007669"/>
    <property type="project" value="UniProtKB-KW"/>
</dbReference>
<dbReference type="GO" id="GO:0003735">
    <property type="term" value="F:structural constituent of ribosome"/>
    <property type="evidence" value="ECO:0007669"/>
    <property type="project" value="InterPro"/>
</dbReference>
<dbReference type="GO" id="GO:0000049">
    <property type="term" value="F:tRNA binding"/>
    <property type="evidence" value="ECO:0007669"/>
    <property type="project" value="UniProtKB-UniRule"/>
</dbReference>
<dbReference type="GO" id="GO:0006412">
    <property type="term" value="P:translation"/>
    <property type="evidence" value="ECO:0007669"/>
    <property type="project" value="UniProtKB-UniRule"/>
</dbReference>
<dbReference type="FunFam" id="3.30.70.600:FF:000003">
    <property type="entry name" value="30S ribosomal protein S10"/>
    <property type="match status" value="1"/>
</dbReference>
<dbReference type="Gene3D" id="3.30.70.600">
    <property type="entry name" value="Ribosomal protein S10 domain"/>
    <property type="match status" value="1"/>
</dbReference>
<dbReference type="HAMAP" id="MF_00508">
    <property type="entry name" value="Ribosomal_uS10"/>
    <property type="match status" value="1"/>
</dbReference>
<dbReference type="InterPro" id="IPR001848">
    <property type="entry name" value="Ribosomal_uS10"/>
</dbReference>
<dbReference type="InterPro" id="IPR027486">
    <property type="entry name" value="Ribosomal_uS10_dom"/>
</dbReference>
<dbReference type="InterPro" id="IPR036838">
    <property type="entry name" value="Ribosomal_uS10_dom_sf"/>
</dbReference>
<dbReference type="NCBIfam" id="NF001861">
    <property type="entry name" value="PRK00596.1"/>
    <property type="match status" value="1"/>
</dbReference>
<dbReference type="NCBIfam" id="TIGR01049">
    <property type="entry name" value="rpsJ_bact"/>
    <property type="match status" value="1"/>
</dbReference>
<dbReference type="PANTHER" id="PTHR11700">
    <property type="entry name" value="30S RIBOSOMAL PROTEIN S10 FAMILY MEMBER"/>
    <property type="match status" value="1"/>
</dbReference>
<dbReference type="Pfam" id="PF00338">
    <property type="entry name" value="Ribosomal_S10"/>
    <property type="match status" value="1"/>
</dbReference>
<dbReference type="PRINTS" id="PR00971">
    <property type="entry name" value="RIBOSOMALS10"/>
</dbReference>
<dbReference type="SMART" id="SM01403">
    <property type="entry name" value="Ribosomal_S10"/>
    <property type="match status" value="1"/>
</dbReference>
<dbReference type="SUPFAM" id="SSF54999">
    <property type="entry name" value="Ribosomal protein S10"/>
    <property type="match status" value="1"/>
</dbReference>
<evidence type="ECO:0000255" key="1">
    <source>
        <dbReference type="HAMAP-Rule" id="MF_00508"/>
    </source>
</evidence>
<evidence type="ECO:0000305" key="2"/>
<feature type="chain" id="PRO_1000060861" description="Small ribosomal subunit protein uS10">
    <location>
        <begin position="1"/>
        <end position="105"/>
    </location>
</feature>
<gene>
    <name evidence="1" type="primary">rpsJ</name>
    <name type="ordered locus">RMA_1041</name>
</gene>